<comment type="function">
    <text evidence="2">Transaldolase is important for the balance of metabolites in the pentose-phosphate pathway.</text>
</comment>
<comment type="catalytic activity">
    <reaction evidence="2">
        <text>D-sedoheptulose 7-phosphate + D-glyceraldehyde 3-phosphate = D-erythrose 4-phosphate + beta-D-fructose 6-phosphate</text>
        <dbReference type="Rhea" id="RHEA:17053"/>
        <dbReference type="ChEBI" id="CHEBI:16897"/>
        <dbReference type="ChEBI" id="CHEBI:57483"/>
        <dbReference type="ChEBI" id="CHEBI:57634"/>
        <dbReference type="ChEBI" id="CHEBI:59776"/>
        <dbReference type="EC" id="2.2.1.2"/>
    </reaction>
</comment>
<comment type="pathway">
    <text evidence="2">Carbohydrate degradation; pentose phosphate pathway; D-glyceraldehyde 3-phosphate and beta-D-fructose 6-phosphate from D-ribose 5-phosphate and D-xylulose 5-phosphate (non-oxidative stage): step 2/3.</text>
</comment>
<comment type="subunit">
    <text evidence="1">Homodimer.</text>
</comment>
<comment type="subcellular location">
    <subcellularLocation>
        <location evidence="2">Cytoplasm</location>
    </subcellularLocation>
</comment>
<comment type="similarity">
    <text evidence="2">Belongs to the transaldolase family. Type 1 subfamily.</text>
</comment>
<protein>
    <recommendedName>
        <fullName evidence="2">Transaldolase</fullName>
        <ecNumber evidence="2">2.2.1.2</ecNumber>
    </recommendedName>
</protein>
<evidence type="ECO:0000250" key="1"/>
<evidence type="ECO:0000255" key="2">
    <source>
        <dbReference type="HAMAP-Rule" id="MF_00492"/>
    </source>
</evidence>
<sequence length="318" mass="34963">MNQLEQLRQFTTVVADTGDFQLMKQYTPQDATTNPSLILKAVQKPEYRHLLEKAVQDHHGNGGVDAVMDEVLIAFGCEILAIVPGRVSTEVDARLSFDTEASVAKARHLIQLYEQRGIARERVLIKIASTWEGIRAAEILQRDGIRCNMTLLFSLVQAVACAEAGAQLISPFVGRIFDWYKKQAGEQWDAAANGGDNDPGVRSVRQIYDYYKKFGYPTEVMGASFRSTTQILSLAGCDLLTISPELLEQLAAGQGPVAHKLSVDQAQAANIARIAADEPAFRWQLNEDAMATEKLAEGIRLFAADAVKLEKLIGEIAK</sequence>
<proteinExistence type="inferred from homology"/>
<reference key="1">
    <citation type="journal article" date="2006" name="Nat. Biotechnol.">
        <title>Genome sequence of the bioplastic-producing 'Knallgas' bacterium Ralstonia eutropha H16.</title>
        <authorList>
            <person name="Pohlmann A."/>
            <person name="Fricke W.F."/>
            <person name="Reinecke F."/>
            <person name="Kusian B."/>
            <person name="Liesegang H."/>
            <person name="Cramm R."/>
            <person name="Eitinger T."/>
            <person name="Ewering C."/>
            <person name="Poetter M."/>
            <person name="Schwartz E."/>
            <person name="Strittmatter A."/>
            <person name="Voss I."/>
            <person name="Gottschalk G."/>
            <person name="Steinbuechel A."/>
            <person name="Friedrich B."/>
            <person name="Bowien B."/>
        </authorList>
    </citation>
    <scope>NUCLEOTIDE SEQUENCE [LARGE SCALE GENOMIC DNA]</scope>
    <source>
        <strain>ATCC 17699 / DSM 428 / KCTC 22496 / NCIMB 10442 / H16 / Stanier 337</strain>
    </source>
</reference>
<feature type="chain" id="PRO_1000014516" description="Transaldolase">
    <location>
        <begin position="1"/>
        <end position="318"/>
    </location>
</feature>
<feature type="active site" description="Schiff-base intermediate with substrate" evidence="2">
    <location>
        <position position="126"/>
    </location>
</feature>
<name>TAL_CUPNH</name>
<keyword id="KW-0963">Cytoplasm</keyword>
<keyword id="KW-0570">Pentose shunt</keyword>
<keyword id="KW-1185">Reference proteome</keyword>
<keyword id="KW-0704">Schiff base</keyword>
<keyword id="KW-0808">Transferase</keyword>
<gene>
    <name evidence="2" type="primary">tal</name>
    <name type="ordered locus">H16_A2346</name>
</gene>
<accession>Q0K979</accession>
<organism>
    <name type="scientific">Cupriavidus necator (strain ATCC 17699 / DSM 428 / KCTC 22496 / NCIMB 10442 / H16 / Stanier 337)</name>
    <name type="common">Ralstonia eutropha</name>
    <dbReference type="NCBI Taxonomy" id="381666"/>
    <lineage>
        <taxon>Bacteria</taxon>
        <taxon>Pseudomonadati</taxon>
        <taxon>Pseudomonadota</taxon>
        <taxon>Betaproteobacteria</taxon>
        <taxon>Burkholderiales</taxon>
        <taxon>Burkholderiaceae</taxon>
        <taxon>Cupriavidus</taxon>
    </lineage>
</organism>
<dbReference type="EC" id="2.2.1.2" evidence="2"/>
<dbReference type="EMBL" id="AM260479">
    <property type="protein sequence ID" value="CAJ93442.1"/>
    <property type="molecule type" value="Genomic_DNA"/>
</dbReference>
<dbReference type="RefSeq" id="WP_010809443.1">
    <property type="nucleotide sequence ID" value="NZ_CP039287.1"/>
</dbReference>
<dbReference type="SMR" id="Q0K979"/>
<dbReference type="STRING" id="381666.H16_A2346"/>
<dbReference type="KEGG" id="reh:H16_A2346"/>
<dbReference type="eggNOG" id="COG0176">
    <property type="taxonomic scope" value="Bacteria"/>
</dbReference>
<dbReference type="HOGENOM" id="CLU_047470_0_1_4"/>
<dbReference type="OrthoDB" id="9809101at2"/>
<dbReference type="UniPathway" id="UPA00115">
    <property type="reaction ID" value="UER00414"/>
</dbReference>
<dbReference type="Proteomes" id="UP000008210">
    <property type="component" value="Chromosome 1"/>
</dbReference>
<dbReference type="GO" id="GO:0005737">
    <property type="term" value="C:cytoplasm"/>
    <property type="evidence" value="ECO:0007669"/>
    <property type="project" value="UniProtKB-SubCell"/>
</dbReference>
<dbReference type="GO" id="GO:0004801">
    <property type="term" value="F:transaldolase activity"/>
    <property type="evidence" value="ECO:0000250"/>
    <property type="project" value="UniProtKB"/>
</dbReference>
<dbReference type="GO" id="GO:0005975">
    <property type="term" value="P:carbohydrate metabolic process"/>
    <property type="evidence" value="ECO:0007669"/>
    <property type="project" value="InterPro"/>
</dbReference>
<dbReference type="GO" id="GO:0006098">
    <property type="term" value="P:pentose-phosphate shunt"/>
    <property type="evidence" value="ECO:0007669"/>
    <property type="project" value="UniProtKB-UniRule"/>
</dbReference>
<dbReference type="CDD" id="cd00957">
    <property type="entry name" value="Transaldolase_TalAB"/>
    <property type="match status" value="1"/>
</dbReference>
<dbReference type="FunFam" id="3.20.20.70:FF:000002">
    <property type="entry name" value="Transaldolase"/>
    <property type="match status" value="1"/>
</dbReference>
<dbReference type="Gene3D" id="3.20.20.70">
    <property type="entry name" value="Aldolase class I"/>
    <property type="match status" value="1"/>
</dbReference>
<dbReference type="HAMAP" id="MF_00492">
    <property type="entry name" value="Transaldolase_1"/>
    <property type="match status" value="1"/>
</dbReference>
<dbReference type="InterPro" id="IPR013785">
    <property type="entry name" value="Aldolase_TIM"/>
</dbReference>
<dbReference type="InterPro" id="IPR001585">
    <property type="entry name" value="TAL/FSA"/>
</dbReference>
<dbReference type="InterPro" id="IPR004730">
    <property type="entry name" value="Transaldolase_1"/>
</dbReference>
<dbReference type="InterPro" id="IPR018225">
    <property type="entry name" value="Transaldolase_AS"/>
</dbReference>
<dbReference type="NCBIfam" id="NF009001">
    <property type="entry name" value="PRK12346.1"/>
    <property type="match status" value="1"/>
</dbReference>
<dbReference type="NCBIfam" id="TIGR00874">
    <property type="entry name" value="talAB"/>
    <property type="match status" value="1"/>
</dbReference>
<dbReference type="PANTHER" id="PTHR10683">
    <property type="entry name" value="TRANSALDOLASE"/>
    <property type="match status" value="1"/>
</dbReference>
<dbReference type="PANTHER" id="PTHR10683:SF18">
    <property type="entry name" value="TRANSALDOLASE"/>
    <property type="match status" value="1"/>
</dbReference>
<dbReference type="Pfam" id="PF00923">
    <property type="entry name" value="TAL_FSA"/>
    <property type="match status" value="1"/>
</dbReference>
<dbReference type="SUPFAM" id="SSF51569">
    <property type="entry name" value="Aldolase"/>
    <property type="match status" value="1"/>
</dbReference>
<dbReference type="PROSITE" id="PS01054">
    <property type="entry name" value="TRANSALDOLASE_1"/>
    <property type="match status" value="1"/>
</dbReference>
<dbReference type="PROSITE" id="PS00958">
    <property type="entry name" value="TRANSALDOLASE_2"/>
    <property type="match status" value="1"/>
</dbReference>